<reference key="1">
    <citation type="journal article" date="1991" name="Gene">
        <title>Conservation and evolution of the nucleus-encoded and chloroplast-specific ribosomal proteins in pea and spinach.</title>
        <authorList>
            <person name="Carol P."/>
            <person name="Li Y.F."/>
            <person name="Mache R."/>
        </authorList>
    </citation>
    <scope>NUCLEOTIDE SEQUENCE [MRNA]</scope>
    <scope>PROTEIN SEQUENCE OF 63-74</scope>
</reference>
<reference key="2">
    <citation type="journal article" date="2000" name="J. Biol. Chem.">
        <title>The plastid ribosomal proteins. Identification of all the proteins in the 50S subunit of an organelle ribosome (chloroplast).</title>
        <authorList>
            <person name="Yamaguchi K."/>
            <person name="Subramanian A.R."/>
        </authorList>
    </citation>
    <scope>NUCLEOTIDE SEQUENCE [MRNA]</scope>
    <scope>PROTEIN SEQUENCE OF 63-68 AND 85-98</scope>
    <scope>SUBUNIT</scope>
    <scope>SUBCELLULAR LOCATION</scope>
    <scope>MASS SPECTROMETRY</scope>
    <source>
        <strain>cv. Alwaro</strain>
        <tissue>Leaf</tissue>
    </source>
</reference>
<reference key="3">
    <citation type="journal article" date="2014" name="Nature">
        <title>The genome of the recently domesticated crop plant sugar beet (Beta vulgaris).</title>
        <authorList>
            <person name="Dohm J.C."/>
            <person name="Minoche A.E."/>
            <person name="Holtgraewe D."/>
            <person name="Capella-Gutierrez S."/>
            <person name="Zakrzewski F."/>
            <person name="Tafer H."/>
            <person name="Rupp O."/>
            <person name="Soerensen T.R."/>
            <person name="Stracke R."/>
            <person name="Reinhardt R."/>
            <person name="Goesmann A."/>
            <person name="Kraft T."/>
            <person name="Schulz B."/>
            <person name="Stadler P.F."/>
            <person name="Schmidt T."/>
            <person name="Gabaldon T."/>
            <person name="Lehrach H."/>
            <person name="Weisshaar B."/>
            <person name="Himmelbauer H."/>
        </authorList>
    </citation>
    <scope>NUCLEOTIDE SEQUENCE [LARGE SCALE GENOMIC DNA]</scope>
    <source>
        <strain>cv. Viroflay</strain>
        <tissue>Leaf</tissue>
    </source>
</reference>
<reference key="4">
    <citation type="journal article" date="2003" name="Eur. J. Biochem.">
        <title>Proteomic identification of all plastid-specific ribosomal proteins in higher plant chloroplast 30S ribosomal subunit.</title>
        <authorList>
            <person name="Yamaguchi K."/>
            <person name="Subramanian A.R."/>
        </authorList>
    </citation>
    <scope>SUBUNIT</scope>
    <scope>SUBCELLULAR LOCATION</scope>
    <scope>MASS SPECTROMETRY</scope>
</reference>
<reference key="5">
    <citation type="journal article" date="2007" name="Proc. Natl. Acad. Sci. U.S.A.">
        <title>Cryo-EM study of the spinach chloroplast ribosome reveals the structural and functional roles of plastid-specific ribosomal proteins.</title>
        <authorList>
            <person name="Sharma M.R."/>
            <person name="Wilson D.N."/>
            <person name="Datta P.P."/>
            <person name="Barat C."/>
            <person name="Schluenzen F."/>
            <person name="Fucini P."/>
            <person name="Agrawal R.K."/>
        </authorList>
    </citation>
    <scope>MODELING ON THE 70S RIBOSOME</scope>
    <scope>POSSIBLE RNA-BINDING</scope>
</reference>
<reference key="6">
    <citation type="journal article" date="2016" name="Sci. Rep.">
        <title>Cryo-EM structure of the large subunit of the spinach chloroplast ribosome.</title>
        <authorList>
            <person name="Ahmed T."/>
            <person name="Yin Z."/>
            <person name="Bhushan S."/>
        </authorList>
    </citation>
    <scope>STRUCTURE BY ELECTRON MICROSCOPY (3.50 ANGSTROMS)</scope>
</reference>
<reference key="7">
    <citation type="journal article" date="2017" name="EMBO J.">
        <title>The complete structure of the chloroplast 70S ribosome in complex with translation factor pY.</title>
        <authorList>
            <person name="Bieri P."/>
            <person name="Leibundgut M."/>
            <person name="Saurer M."/>
            <person name="Boehringer D."/>
            <person name="Ban N."/>
        </authorList>
    </citation>
    <scope>STRUCTURE BY ELECTRON MICROSCOPY (3.25 ANGSTROMS)</scope>
    <scope>SUBUNIT</scope>
    <scope>SUBCELLULAR LOCATION</scope>
</reference>
<feature type="transit peptide" description="Chloroplast" evidence="2 4">
    <location>
        <begin position="1"/>
        <end position="62"/>
    </location>
</feature>
<feature type="chain" id="PRO_0000030555" description="Large ribosomal subunit protein cL37 alpha">
    <location>
        <begin position="63"/>
        <end position="142"/>
    </location>
</feature>
<feature type="chain" id="PRO_0000248878" description="Large ribosomal subunit protein cL37 beta">
    <location>
        <begin position="85"/>
        <end position="142"/>
    </location>
</feature>
<feature type="chain" id="PRO_0000248879" description="Large ribosomal subunit protein cL37 gamma">
    <location>
        <begin position="89"/>
        <end position="142"/>
    </location>
</feature>
<feature type="region of interest" description="Disordered" evidence="1">
    <location>
        <begin position="123"/>
        <end position="142"/>
    </location>
</feature>
<feature type="sequence conflict" description="In Ref. 3; KNA26006." evidence="8" ref="3">
    <original>SF</original>
    <variation>TL</variation>
    <location>
        <begin position="40"/>
        <end position="41"/>
    </location>
</feature>
<feature type="sequence conflict" description="In Ref. 3; KNA26006." evidence="8" ref="3">
    <original>VA</original>
    <variation>MT</variation>
    <location>
        <begin position="46"/>
        <end position="47"/>
    </location>
</feature>
<feature type="sequence conflict" description="In Ref. 3; KNA26006." evidence="8" ref="3">
    <original>E</original>
    <variation>D</variation>
    <location>
        <position position="68"/>
    </location>
</feature>
<feature type="sequence conflict" description="In Ref. 3; KNA26006." evidence="8" ref="3">
    <original>I</original>
    <variation>M</variation>
    <location>
        <position position="104"/>
    </location>
</feature>
<feature type="sequence conflict" description="In Ref. 1; AAA34044." evidence="8" ref="1">
    <original>NRLMRKRK</original>
    <variation>TGLCAKES</variation>
    <location>
        <begin position="117"/>
        <end position="124"/>
    </location>
</feature>
<feature type="helix" evidence="11">
    <location>
        <begin position="81"/>
        <end position="83"/>
    </location>
</feature>
<feature type="helix" evidence="12">
    <location>
        <begin position="95"/>
        <end position="128"/>
    </location>
</feature>
<feature type="helix" evidence="12">
    <location>
        <begin position="133"/>
        <end position="139"/>
    </location>
</feature>
<protein>
    <recommendedName>
        <fullName evidence="7">Large ribosomal subunit protein cL37 alpha</fullName>
    </recommendedName>
    <alternativeName>
        <fullName evidence="8">50S ribosomal protein 5, chloroplastic</fullName>
    </alternativeName>
    <alternativeName>
        <fullName>50S ribosomal protein L40</fullName>
    </alternativeName>
    <alternativeName>
        <fullName>CL40</fullName>
    </alternativeName>
    <alternativeName>
        <fullName evidence="6">Plastid-specific 50S ribosomal protein 5 alpha</fullName>
        <shortName>PSRP-5</shortName>
    </alternativeName>
    <component>
        <recommendedName>
            <fullName evidence="6">Large ribosomal subunit protein cL37 beta</fullName>
        </recommendedName>
    </component>
    <component>
        <recommendedName>
            <fullName evidence="6">Large ribosomal subunit protein cL37 gamma</fullName>
        </recommendedName>
    </component>
</protein>
<comment type="function">
    <text evidence="9 10">Component of the chloroplast ribosome (chloro-ribosome), a dedicated translation machinery responsible for the synthesis of chloroplast genome-encoded proteins, including proteins of the transcription and translation machinery and components of the photosynthetic apparatus.</text>
</comment>
<comment type="subunit">
    <text evidence="2 5">Component of the chloroplast large ribosomal subunit (LSU). Mature 70S chloroplast ribosomes of higher plants consist of a small (30S) and a large (50S) subunit. The 30S small subunit contains 1 molecule of ribosomal RNA (16S rRNA) and 24 different proteins. The 50S large subunit contains 3 rRNA molecules (23S, 5S and 4.5S rRNA) and 33 different proteins.</text>
</comment>
<comment type="subcellular location">
    <subcellularLocation>
        <location evidence="2 5">Plastid</location>
        <location evidence="2 5">Chloroplast</location>
    </subcellularLocation>
</comment>
<comment type="mass spectrometry" mass="9296.0" method="Electrospray" evidence="2">
    <molecule>Large ribosomal subunit protein cL37 alpha</molecule>
    <text>PSRP-5 alpha form.</text>
</comment>
<comment type="mass spectrometry" mass="9255.0" method="Electrospray" evidence="3">
    <molecule>Large ribosomal subunit protein cL37 alpha</molecule>
    <text>PSRP-5 alpha form.</text>
</comment>
<comment type="mass spectrometry" mass="7065.0" method="Electrospray" evidence="2">
    <molecule>Large ribosomal subunit protein cL37 beta</molecule>
    <text>PSRP-5 beta form.</text>
</comment>
<comment type="mass spectrometry" mass="7066.0" method="Electrospray" evidence="3">
    <molecule>Large ribosomal subunit protein cL37 beta</molecule>
    <text>PSRP-5 beta form.</text>
</comment>
<comment type="mass spectrometry" mass="6636.5" method="Electrospray" evidence="2">
    <molecule>Large ribosomal subunit protein cL37 gamma</molecule>
    <text>PSRP-5 gamma form.</text>
</comment>
<comment type="mass spectrometry" mass="6638.0" method="Electrospray" evidence="3">
    <molecule>Large ribosomal subunit protein cL37 gamma</molecule>
    <text>PSRP-5 gamma form.</text>
</comment>
<comment type="miscellaneous">
    <text evidence="2">Three different forms exist, PSRP-5 alpha, PSRP-5 beta and PSRP-5 gamma, due to different transit peptide cleavage.</text>
</comment>
<comment type="similarity">
    <text evidence="8">Belongs to the chloroplast-specific ribosomal protein cL37 family.</text>
</comment>
<organism>
    <name type="scientific">Spinacia oleracea</name>
    <name type="common">Spinach</name>
    <dbReference type="NCBI Taxonomy" id="3562"/>
    <lineage>
        <taxon>Eukaryota</taxon>
        <taxon>Viridiplantae</taxon>
        <taxon>Streptophyta</taxon>
        <taxon>Embryophyta</taxon>
        <taxon>Tracheophyta</taxon>
        <taxon>Spermatophyta</taxon>
        <taxon>Magnoliopsida</taxon>
        <taxon>eudicotyledons</taxon>
        <taxon>Gunneridae</taxon>
        <taxon>Pentapetalae</taxon>
        <taxon>Caryophyllales</taxon>
        <taxon>Chenopodiaceae</taxon>
        <taxon>Chenopodioideae</taxon>
        <taxon>Anserineae</taxon>
        <taxon>Spinacia</taxon>
    </lineage>
</organism>
<evidence type="ECO:0000256" key="1">
    <source>
        <dbReference type="SAM" id="MobiDB-lite"/>
    </source>
</evidence>
<evidence type="ECO:0000269" key="2">
    <source>
    </source>
</evidence>
<evidence type="ECO:0000269" key="3">
    <source>
    </source>
</evidence>
<evidence type="ECO:0000269" key="4">
    <source>
    </source>
</evidence>
<evidence type="ECO:0000269" key="5">
    <source>
    </source>
</evidence>
<evidence type="ECO:0000303" key="6">
    <source>
    </source>
</evidence>
<evidence type="ECO:0000303" key="7">
    <source>
    </source>
</evidence>
<evidence type="ECO:0000305" key="8"/>
<evidence type="ECO:0000305" key="9">
    <source>
    </source>
</evidence>
<evidence type="ECO:0000305" key="10">
    <source>
    </source>
</evidence>
<evidence type="ECO:0007829" key="11">
    <source>
        <dbReference type="PDB" id="5H1S"/>
    </source>
</evidence>
<evidence type="ECO:0007829" key="12">
    <source>
        <dbReference type="PDB" id="5MMI"/>
    </source>
</evidence>
<name>PSRP5_SPIOL</name>
<dbReference type="EMBL" id="M58523">
    <property type="protein sequence ID" value="AAA34044.1"/>
    <property type="molecule type" value="mRNA"/>
</dbReference>
<dbReference type="EMBL" id="AF261940">
    <property type="protein sequence ID" value="AAF72995.1"/>
    <property type="molecule type" value="mRNA"/>
</dbReference>
<dbReference type="EMBL" id="KQ130794">
    <property type="protein sequence ID" value="KNA26006.1"/>
    <property type="molecule type" value="Genomic_DNA"/>
</dbReference>
<dbReference type="PIR" id="JH0586">
    <property type="entry name" value="JH0586"/>
</dbReference>
<dbReference type="PDB" id="5H1S">
    <property type="method" value="EM"/>
    <property type="resolution" value="3.50 A"/>
    <property type="chains" value="g=1-142"/>
</dbReference>
<dbReference type="PDB" id="5MLC">
    <property type="method" value="EM"/>
    <property type="resolution" value="3.90 A"/>
    <property type="chains" value="7=1-142"/>
</dbReference>
<dbReference type="PDB" id="5MMI">
    <property type="method" value="EM"/>
    <property type="resolution" value="3.25 A"/>
    <property type="chains" value="6=1-142"/>
</dbReference>
<dbReference type="PDB" id="5MMM">
    <property type="method" value="EM"/>
    <property type="resolution" value="3.40 A"/>
    <property type="chains" value="6=1-142"/>
</dbReference>
<dbReference type="PDB" id="5X8P">
    <property type="method" value="EM"/>
    <property type="resolution" value="3.40 A"/>
    <property type="chains" value="6=1-142"/>
</dbReference>
<dbReference type="PDB" id="5X8T">
    <property type="method" value="EM"/>
    <property type="resolution" value="3.30 A"/>
    <property type="chains" value="6=1-142"/>
</dbReference>
<dbReference type="PDB" id="6ERI">
    <property type="method" value="EM"/>
    <property type="resolution" value="3.00 A"/>
    <property type="chains" value="Aw=94-142"/>
</dbReference>
<dbReference type="PDBsum" id="5H1S"/>
<dbReference type="PDBsum" id="5MLC"/>
<dbReference type="PDBsum" id="5MMI"/>
<dbReference type="PDBsum" id="5MMM"/>
<dbReference type="PDBsum" id="5X8P"/>
<dbReference type="PDBsum" id="5X8T"/>
<dbReference type="PDBsum" id="6ERI"/>
<dbReference type="EMDB" id="EMD-3525"/>
<dbReference type="EMDB" id="EMD-3531"/>
<dbReference type="EMDB" id="EMD-3533"/>
<dbReference type="EMDB" id="EMD-3941"/>
<dbReference type="EMDB" id="EMD-6709"/>
<dbReference type="EMDB" id="EMD-6711"/>
<dbReference type="EMDB" id="EMD-9572"/>
<dbReference type="SMR" id="P27684"/>
<dbReference type="IntAct" id="P27684">
    <property type="interactions" value="29"/>
</dbReference>
<dbReference type="STRING" id="3562.P27684"/>
<dbReference type="OrthoDB" id="782293at2759"/>
<dbReference type="Proteomes" id="UP001155700">
    <property type="component" value="Unplaced"/>
</dbReference>
<dbReference type="GO" id="GO:0009535">
    <property type="term" value="C:chloroplast thylakoid membrane"/>
    <property type="evidence" value="ECO:0007669"/>
    <property type="project" value="TreeGrafter"/>
</dbReference>
<dbReference type="GO" id="GO:1990904">
    <property type="term" value="C:ribonucleoprotein complex"/>
    <property type="evidence" value="ECO:0007669"/>
    <property type="project" value="UniProtKB-KW"/>
</dbReference>
<dbReference type="GO" id="GO:0005840">
    <property type="term" value="C:ribosome"/>
    <property type="evidence" value="ECO:0007669"/>
    <property type="project" value="UniProtKB-KW"/>
</dbReference>
<dbReference type="GO" id="GO:0019843">
    <property type="term" value="F:rRNA binding"/>
    <property type="evidence" value="ECO:0007669"/>
    <property type="project" value="UniProtKB-KW"/>
</dbReference>
<dbReference type="GO" id="GO:0032544">
    <property type="term" value="P:plastid translation"/>
    <property type="evidence" value="ECO:0000318"/>
    <property type="project" value="GO_Central"/>
</dbReference>
<dbReference type="CDD" id="cd23709">
    <property type="entry name" value="Psrp5_CTD"/>
    <property type="match status" value="1"/>
</dbReference>
<dbReference type="InterPro" id="IPR040307">
    <property type="entry name" value="Ribosomal_cL37"/>
</dbReference>
<dbReference type="PANTHER" id="PTHR34678">
    <property type="entry name" value="50S RIBOSOMAL PROTEIN 5, CHLOROPLASTIC"/>
    <property type="match status" value="1"/>
</dbReference>
<dbReference type="PANTHER" id="PTHR34678:SF1">
    <property type="entry name" value="LARGE RIBOSOMAL SUBUNIT PROTEIN CL37"/>
    <property type="match status" value="1"/>
</dbReference>
<keyword id="KW-0002">3D-structure</keyword>
<keyword id="KW-0150">Chloroplast</keyword>
<keyword id="KW-0903">Direct protein sequencing</keyword>
<keyword id="KW-0934">Plastid</keyword>
<keyword id="KW-1185">Reference proteome</keyword>
<keyword id="KW-0687">Ribonucleoprotein</keyword>
<keyword id="KW-0689">Ribosomal protein</keyword>
<keyword id="KW-0694">RNA-binding</keyword>
<keyword id="KW-0699">rRNA-binding</keyword>
<keyword id="KW-0809">Transit peptide</keyword>
<accession>P27684</accession>
<accession>A0A0K9S2M7</accession>
<accession>Q9M4R3</accession>
<sequence length="142" mass="15621">MALLSPLLSLSSVPPITSIAVSSSSFPIKLQNVSVALLPSFGQRLVAHGPVIAQKRGTVVAMVSAAAEETAGEDGDQSKVEEANISVQNLPLESKLQLKLEQKIKMKMAKKIRLRRNRLMRKRKLRKRGAWPPSKMKKLKNV</sequence>
<gene>
    <name type="primary">PSRP5</name>
    <name type="synonym">RPL40</name>
    <name type="ORF">SOVF_000530</name>
</gene>
<proteinExistence type="evidence at protein level"/>